<proteinExistence type="inferred from homology"/>
<sequence>MSIIIKIHARQIFDSRGNPTIEVDVVTENGVLGRAAVPSGASTGEHEAMELRDGGKAYLGKGVLKAVENVNTIIASELLGTSVFEQNLIDKIMIDLDGTPNKSNLGANAILGVSLAAAKAAANELGLPLYRYIGGVSANTLPVPMMNIINGGSHSDAPIAFQEFMIIPVKAASFTQAMQMGTEIFHHLKKVLHDRGLSTAVGDEGGFAPNLAGGTEDALETIKKAVQSAGYTFGDDIMIALDCAASEFYVNGKYDYTKFEGTTGKIRTSEEQADYLAELASKYPIISIEDGMQEDDWAGWKYLTEKIGHKTQLVGDDLFVTNVTRLSRGISEGIANSILVKVNQIGTLTETIAAVNMAHNAGYTSVMSHRSGETEDHTIADLAVALNCGQIKTGSASRSDRMSKYNQLLRIEEELNDVAYFPGAKAFKK</sequence>
<accession>A6GZ69</accession>
<protein>
    <recommendedName>
        <fullName evidence="1">Enolase</fullName>
        <ecNumber evidence="1">4.2.1.11</ecNumber>
    </recommendedName>
    <alternativeName>
        <fullName evidence="1">2-phospho-D-glycerate hydro-lyase</fullName>
    </alternativeName>
    <alternativeName>
        <fullName evidence="1">2-phosphoglycerate dehydratase</fullName>
    </alternativeName>
</protein>
<organism>
    <name type="scientific">Flavobacterium psychrophilum (strain ATCC 49511 / DSM 21280 / CIP 103535 / JIP02/86)</name>
    <dbReference type="NCBI Taxonomy" id="402612"/>
    <lineage>
        <taxon>Bacteria</taxon>
        <taxon>Pseudomonadati</taxon>
        <taxon>Bacteroidota</taxon>
        <taxon>Flavobacteriia</taxon>
        <taxon>Flavobacteriales</taxon>
        <taxon>Flavobacteriaceae</taxon>
        <taxon>Flavobacterium</taxon>
    </lineage>
</organism>
<evidence type="ECO:0000255" key="1">
    <source>
        <dbReference type="HAMAP-Rule" id="MF_00318"/>
    </source>
</evidence>
<name>ENO_FLAPJ</name>
<keyword id="KW-0963">Cytoplasm</keyword>
<keyword id="KW-0324">Glycolysis</keyword>
<keyword id="KW-0456">Lyase</keyword>
<keyword id="KW-0460">Magnesium</keyword>
<keyword id="KW-0479">Metal-binding</keyword>
<keyword id="KW-1185">Reference proteome</keyword>
<keyword id="KW-0964">Secreted</keyword>
<feature type="chain" id="PRO_1000019208" description="Enolase">
    <location>
        <begin position="1"/>
        <end position="429"/>
    </location>
</feature>
<feature type="active site" description="Proton donor" evidence="1">
    <location>
        <position position="204"/>
    </location>
</feature>
<feature type="active site" description="Proton acceptor" evidence="1">
    <location>
        <position position="341"/>
    </location>
</feature>
<feature type="binding site" evidence="1">
    <location>
        <position position="162"/>
    </location>
    <ligand>
        <name>(2R)-2-phosphoglycerate</name>
        <dbReference type="ChEBI" id="CHEBI:58289"/>
    </ligand>
</feature>
<feature type="binding site" evidence="1">
    <location>
        <position position="242"/>
    </location>
    <ligand>
        <name>Mg(2+)</name>
        <dbReference type="ChEBI" id="CHEBI:18420"/>
    </ligand>
</feature>
<feature type="binding site" evidence="1">
    <location>
        <position position="289"/>
    </location>
    <ligand>
        <name>Mg(2+)</name>
        <dbReference type="ChEBI" id="CHEBI:18420"/>
    </ligand>
</feature>
<feature type="binding site" evidence="1">
    <location>
        <position position="316"/>
    </location>
    <ligand>
        <name>Mg(2+)</name>
        <dbReference type="ChEBI" id="CHEBI:18420"/>
    </ligand>
</feature>
<feature type="binding site" evidence="1">
    <location>
        <position position="341"/>
    </location>
    <ligand>
        <name>(2R)-2-phosphoglycerate</name>
        <dbReference type="ChEBI" id="CHEBI:58289"/>
    </ligand>
</feature>
<feature type="binding site" evidence="1">
    <location>
        <position position="370"/>
    </location>
    <ligand>
        <name>(2R)-2-phosphoglycerate</name>
        <dbReference type="ChEBI" id="CHEBI:58289"/>
    </ligand>
</feature>
<feature type="binding site" evidence="1">
    <location>
        <position position="371"/>
    </location>
    <ligand>
        <name>(2R)-2-phosphoglycerate</name>
        <dbReference type="ChEBI" id="CHEBI:58289"/>
    </ligand>
</feature>
<feature type="binding site" evidence="1">
    <location>
        <position position="392"/>
    </location>
    <ligand>
        <name>(2R)-2-phosphoglycerate</name>
        <dbReference type="ChEBI" id="CHEBI:58289"/>
    </ligand>
</feature>
<comment type="function">
    <text evidence="1">Catalyzes the reversible conversion of 2-phosphoglycerate (2-PG) into phosphoenolpyruvate (PEP). It is essential for the degradation of carbohydrates via glycolysis.</text>
</comment>
<comment type="catalytic activity">
    <reaction evidence="1">
        <text>(2R)-2-phosphoglycerate = phosphoenolpyruvate + H2O</text>
        <dbReference type="Rhea" id="RHEA:10164"/>
        <dbReference type="ChEBI" id="CHEBI:15377"/>
        <dbReference type="ChEBI" id="CHEBI:58289"/>
        <dbReference type="ChEBI" id="CHEBI:58702"/>
        <dbReference type="EC" id="4.2.1.11"/>
    </reaction>
</comment>
<comment type="cofactor">
    <cofactor evidence="1">
        <name>Mg(2+)</name>
        <dbReference type="ChEBI" id="CHEBI:18420"/>
    </cofactor>
    <text evidence="1">Binds a second Mg(2+) ion via substrate during catalysis.</text>
</comment>
<comment type="pathway">
    <text evidence="1">Carbohydrate degradation; glycolysis; pyruvate from D-glyceraldehyde 3-phosphate: step 4/5.</text>
</comment>
<comment type="subcellular location">
    <subcellularLocation>
        <location evidence="1">Cytoplasm</location>
    </subcellularLocation>
    <subcellularLocation>
        <location evidence="1">Secreted</location>
    </subcellularLocation>
    <subcellularLocation>
        <location evidence="1">Cell surface</location>
    </subcellularLocation>
    <text evidence="1">Fractions of enolase are present in both the cytoplasm and on the cell surface.</text>
</comment>
<comment type="similarity">
    <text evidence="1">Belongs to the enolase family.</text>
</comment>
<reference key="1">
    <citation type="journal article" date="2007" name="Nat. Biotechnol.">
        <title>Complete genome sequence of the fish pathogen Flavobacterium psychrophilum.</title>
        <authorList>
            <person name="Duchaud E."/>
            <person name="Boussaha M."/>
            <person name="Loux V."/>
            <person name="Bernardet J.-F."/>
            <person name="Michel C."/>
            <person name="Kerouault B."/>
            <person name="Mondot S."/>
            <person name="Nicolas P."/>
            <person name="Bossy R."/>
            <person name="Caron C."/>
            <person name="Bessieres P."/>
            <person name="Gibrat J.-F."/>
            <person name="Claverol S."/>
            <person name="Dumetz F."/>
            <person name="Le Henaff M."/>
            <person name="Benmansour A."/>
        </authorList>
    </citation>
    <scope>NUCLEOTIDE SEQUENCE [LARGE SCALE GENOMIC DNA]</scope>
    <source>
        <strain>ATCC 49511 / DSM 21280 / CIP 103535 / JIP02/86</strain>
    </source>
</reference>
<dbReference type="EC" id="4.2.1.11" evidence="1"/>
<dbReference type="EMBL" id="AM398681">
    <property type="protein sequence ID" value="CAL43392.1"/>
    <property type="molecule type" value="Genomic_DNA"/>
</dbReference>
<dbReference type="RefSeq" id="WP_011963441.1">
    <property type="nucleotide sequence ID" value="NC_009613.3"/>
</dbReference>
<dbReference type="RefSeq" id="YP_001296203.1">
    <property type="nucleotide sequence ID" value="NC_009613.3"/>
</dbReference>
<dbReference type="SMR" id="A6GZ69"/>
<dbReference type="STRING" id="402612.FP1309"/>
<dbReference type="EnsemblBacteria" id="CAL43392">
    <property type="protein sequence ID" value="CAL43392"/>
    <property type="gene ID" value="FP1309"/>
</dbReference>
<dbReference type="GeneID" id="66553212"/>
<dbReference type="KEGG" id="fps:FP1309"/>
<dbReference type="PATRIC" id="fig|402612.5.peg.1326"/>
<dbReference type="eggNOG" id="COG0148">
    <property type="taxonomic scope" value="Bacteria"/>
</dbReference>
<dbReference type="HOGENOM" id="CLU_031223_2_1_10"/>
<dbReference type="OrthoDB" id="9804716at2"/>
<dbReference type="UniPathway" id="UPA00109">
    <property type="reaction ID" value="UER00187"/>
</dbReference>
<dbReference type="Proteomes" id="UP000006394">
    <property type="component" value="Chromosome"/>
</dbReference>
<dbReference type="GO" id="GO:0009986">
    <property type="term" value="C:cell surface"/>
    <property type="evidence" value="ECO:0007669"/>
    <property type="project" value="UniProtKB-SubCell"/>
</dbReference>
<dbReference type="GO" id="GO:0005576">
    <property type="term" value="C:extracellular region"/>
    <property type="evidence" value="ECO:0007669"/>
    <property type="project" value="UniProtKB-SubCell"/>
</dbReference>
<dbReference type="GO" id="GO:0000015">
    <property type="term" value="C:phosphopyruvate hydratase complex"/>
    <property type="evidence" value="ECO:0007669"/>
    <property type="project" value="InterPro"/>
</dbReference>
<dbReference type="GO" id="GO:0000287">
    <property type="term" value="F:magnesium ion binding"/>
    <property type="evidence" value="ECO:0007669"/>
    <property type="project" value="UniProtKB-UniRule"/>
</dbReference>
<dbReference type="GO" id="GO:0004634">
    <property type="term" value="F:phosphopyruvate hydratase activity"/>
    <property type="evidence" value="ECO:0007669"/>
    <property type="project" value="UniProtKB-UniRule"/>
</dbReference>
<dbReference type="GO" id="GO:0006096">
    <property type="term" value="P:glycolytic process"/>
    <property type="evidence" value="ECO:0007669"/>
    <property type="project" value="UniProtKB-UniRule"/>
</dbReference>
<dbReference type="CDD" id="cd03313">
    <property type="entry name" value="enolase"/>
    <property type="match status" value="1"/>
</dbReference>
<dbReference type="FunFam" id="3.20.20.120:FF:000001">
    <property type="entry name" value="Enolase"/>
    <property type="match status" value="1"/>
</dbReference>
<dbReference type="FunFam" id="3.30.390.10:FF:000001">
    <property type="entry name" value="Enolase"/>
    <property type="match status" value="1"/>
</dbReference>
<dbReference type="Gene3D" id="3.20.20.120">
    <property type="entry name" value="Enolase-like C-terminal domain"/>
    <property type="match status" value="1"/>
</dbReference>
<dbReference type="Gene3D" id="3.30.390.10">
    <property type="entry name" value="Enolase-like, N-terminal domain"/>
    <property type="match status" value="1"/>
</dbReference>
<dbReference type="HAMAP" id="MF_00318">
    <property type="entry name" value="Enolase"/>
    <property type="match status" value="1"/>
</dbReference>
<dbReference type="InterPro" id="IPR000941">
    <property type="entry name" value="Enolase"/>
</dbReference>
<dbReference type="InterPro" id="IPR036849">
    <property type="entry name" value="Enolase-like_C_sf"/>
</dbReference>
<dbReference type="InterPro" id="IPR029017">
    <property type="entry name" value="Enolase-like_N"/>
</dbReference>
<dbReference type="InterPro" id="IPR020810">
    <property type="entry name" value="Enolase_C"/>
</dbReference>
<dbReference type="InterPro" id="IPR020809">
    <property type="entry name" value="Enolase_CS"/>
</dbReference>
<dbReference type="InterPro" id="IPR020811">
    <property type="entry name" value="Enolase_N"/>
</dbReference>
<dbReference type="NCBIfam" id="TIGR01060">
    <property type="entry name" value="eno"/>
    <property type="match status" value="1"/>
</dbReference>
<dbReference type="PANTHER" id="PTHR11902">
    <property type="entry name" value="ENOLASE"/>
    <property type="match status" value="1"/>
</dbReference>
<dbReference type="PANTHER" id="PTHR11902:SF1">
    <property type="entry name" value="ENOLASE"/>
    <property type="match status" value="1"/>
</dbReference>
<dbReference type="Pfam" id="PF00113">
    <property type="entry name" value="Enolase_C"/>
    <property type="match status" value="1"/>
</dbReference>
<dbReference type="Pfam" id="PF03952">
    <property type="entry name" value="Enolase_N"/>
    <property type="match status" value="1"/>
</dbReference>
<dbReference type="PIRSF" id="PIRSF001400">
    <property type="entry name" value="Enolase"/>
    <property type="match status" value="1"/>
</dbReference>
<dbReference type="PRINTS" id="PR00148">
    <property type="entry name" value="ENOLASE"/>
</dbReference>
<dbReference type="SFLD" id="SFLDF00002">
    <property type="entry name" value="enolase"/>
    <property type="match status" value="1"/>
</dbReference>
<dbReference type="SFLD" id="SFLDG00178">
    <property type="entry name" value="enolase"/>
    <property type="match status" value="1"/>
</dbReference>
<dbReference type="SMART" id="SM01192">
    <property type="entry name" value="Enolase_C"/>
    <property type="match status" value="1"/>
</dbReference>
<dbReference type="SMART" id="SM01193">
    <property type="entry name" value="Enolase_N"/>
    <property type="match status" value="1"/>
</dbReference>
<dbReference type="SUPFAM" id="SSF51604">
    <property type="entry name" value="Enolase C-terminal domain-like"/>
    <property type="match status" value="1"/>
</dbReference>
<dbReference type="SUPFAM" id="SSF54826">
    <property type="entry name" value="Enolase N-terminal domain-like"/>
    <property type="match status" value="1"/>
</dbReference>
<dbReference type="PROSITE" id="PS00164">
    <property type="entry name" value="ENOLASE"/>
    <property type="match status" value="1"/>
</dbReference>
<gene>
    <name evidence="1" type="primary">eno</name>
    <name type="ordered locus">FP1309</name>
</gene>